<protein>
    <recommendedName>
        <fullName evidence="1">Bifunctional glutamine synthetase adenylyltransferase/adenylyl-removing enzyme</fullName>
    </recommendedName>
    <alternativeName>
        <fullName evidence="1">ATP:glutamine synthetase adenylyltransferase</fullName>
    </alternativeName>
    <alternativeName>
        <fullName evidence="1">ATase</fullName>
    </alternativeName>
    <domain>
        <recommendedName>
            <fullName evidence="1">Glutamine synthetase adenylyl-L-tyrosine phosphorylase</fullName>
            <ecNumber evidence="1">2.7.7.89</ecNumber>
        </recommendedName>
        <alternativeName>
            <fullName evidence="1">Adenylyl removase</fullName>
            <shortName evidence="1">AR</shortName>
            <shortName evidence="1">AT-N</shortName>
        </alternativeName>
    </domain>
    <domain>
        <recommendedName>
            <fullName evidence="1">Glutamine synthetase adenylyl transferase</fullName>
            <ecNumber evidence="1">2.7.7.42</ecNumber>
        </recommendedName>
        <alternativeName>
            <fullName evidence="1">Adenylyl transferase</fullName>
            <shortName evidence="1">AT</shortName>
            <shortName evidence="1">AT-C</shortName>
        </alternativeName>
    </domain>
</protein>
<feature type="chain" id="PRO_1000047017" description="Bifunctional glutamine synthetase adenylyltransferase/adenylyl-removing enzyme">
    <location>
        <begin position="1"/>
        <end position="946"/>
    </location>
</feature>
<feature type="region of interest" description="Adenylyl removase" evidence="1">
    <location>
        <begin position="1"/>
        <end position="440"/>
    </location>
</feature>
<feature type="region of interest" description="Adenylyl transferase" evidence="1">
    <location>
        <begin position="449"/>
        <end position="946"/>
    </location>
</feature>
<organism>
    <name type="scientific">Shigella sonnei (strain Ss046)</name>
    <dbReference type="NCBI Taxonomy" id="300269"/>
    <lineage>
        <taxon>Bacteria</taxon>
        <taxon>Pseudomonadati</taxon>
        <taxon>Pseudomonadota</taxon>
        <taxon>Gammaproteobacteria</taxon>
        <taxon>Enterobacterales</taxon>
        <taxon>Enterobacteriaceae</taxon>
        <taxon>Shigella</taxon>
    </lineage>
</organism>
<sequence>MKPLSSPLQQYRQTVVERLPEPLAEEPLSAQAKSVLTFSDFVQDSIIAHREWLTELESQPPQADEWQHYAAWLQEALSNVSDEAGLMRELRLFRRRIMVRIAWAQTLALVTEESILQQLSYLAETLIVAARDWLYDACCREWGTPCNAQGEAQPLLILGMGKLGGGELNFSSDIDLIFAWPEHGCTQGGRRELDNAQFFTRMGQRLIKVLDQPTQDGFVYRVDMRLRPFGESGPLVLSFAALEDYYQEQGRDWERYAMVKARIMGDSEGVYANELRAMLRPFVFRRYIDFSVIQSLRNMKGMIAREVRRRGLTDNIKLGAGGIREIEFIVQVFQLIRGGREPSLQSCSLLPTLSAIAALHLLSENDAEQLRVAYLFLRRLENLLQSINDEQTQTLPSDELNRARLAWAMDFADWPQLTGALTAHMNNVRRVFNELIGDDESETQEESLSEQWRELWQDALQEDDTTPVLAHLSEDDRKQVLTLISDFRKELDKRTIGPRGRQVLDHLMPHLLSDVCAREDAAVTLSRITALLVGIVTRTTYLELLSEFPAALNHLISLCAASPMIASQLARYPLLLDELLDPNTLYQPTATDAYRDELRQYLLRVPEDDEEQQLEALRQFKQAQLLRIAAADIAGTLPVMKVSDHLTWLAEAMIDAVVQQAWVQMVARYGKPNHLNDREGRGFAVVGYGKLGGWELGYSSDLDLIFLHDCPMDAMTDGEREIDGRQFYLRLAQRIMHLFSTRTSSGILYEVDARLRPSGAAGMLVTSTEAFADYQKNEAWTWEHQALVRARVVYGDPQLTAHFDAVRREIMTLPREGRTLQTEVREMREKMRAHLGNKHRDRFDIKADEGGITDIEFITQYLVLRYAHEKPKLTRWSDNVRILELLAQNDIMEEQEAMALTRAYTTLRDELHHLALQELPGHVSGDCFTAERDLVRASWQKWLVEE</sequence>
<dbReference type="EC" id="2.7.7.89" evidence="1"/>
<dbReference type="EC" id="2.7.7.42" evidence="1"/>
<dbReference type="EMBL" id="CP000038">
    <property type="protein sequence ID" value="AAZ89773.1"/>
    <property type="molecule type" value="Genomic_DNA"/>
</dbReference>
<dbReference type="RefSeq" id="WP_011310290.1">
    <property type="nucleotide sequence ID" value="NC_007384.1"/>
</dbReference>
<dbReference type="SMR" id="Q3YXI9"/>
<dbReference type="KEGG" id="ssn:SSON_3190"/>
<dbReference type="HOGENOM" id="CLU_006233_0_1_6"/>
<dbReference type="Proteomes" id="UP000002529">
    <property type="component" value="Chromosome"/>
</dbReference>
<dbReference type="GO" id="GO:0005829">
    <property type="term" value="C:cytosol"/>
    <property type="evidence" value="ECO:0007669"/>
    <property type="project" value="TreeGrafter"/>
</dbReference>
<dbReference type="GO" id="GO:0008882">
    <property type="term" value="F:[glutamate-ammonia-ligase] adenylyltransferase activity"/>
    <property type="evidence" value="ECO:0007669"/>
    <property type="project" value="UniProtKB-UniRule"/>
</dbReference>
<dbReference type="GO" id="GO:0047388">
    <property type="term" value="F:[glutamine synthetase]-adenylyl-L-tyrosine phosphorylase activity"/>
    <property type="evidence" value="ECO:0007669"/>
    <property type="project" value="UniProtKB-EC"/>
</dbReference>
<dbReference type="GO" id="GO:0005524">
    <property type="term" value="F:ATP binding"/>
    <property type="evidence" value="ECO:0007669"/>
    <property type="project" value="UniProtKB-UniRule"/>
</dbReference>
<dbReference type="GO" id="GO:0000287">
    <property type="term" value="F:magnesium ion binding"/>
    <property type="evidence" value="ECO:0007669"/>
    <property type="project" value="UniProtKB-UniRule"/>
</dbReference>
<dbReference type="GO" id="GO:0000820">
    <property type="term" value="P:regulation of glutamine family amino acid metabolic process"/>
    <property type="evidence" value="ECO:0007669"/>
    <property type="project" value="UniProtKB-UniRule"/>
</dbReference>
<dbReference type="CDD" id="cd05401">
    <property type="entry name" value="NT_GlnE_GlnD_like"/>
    <property type="match status" value="2"/>
</dbReference>
<dbReference type="FunFam" id="1.10.4050.10:FF:000001">
    <property type="entry name" value="Bifunctional glutamine synthetase adenylyltransferase/adenylyl-removing enzyme"/>
    <property type="match status" value="1"/>
</dbReference>
<dbReference type="FunFam" id="1.20.120.1510:FF:000001">
    <property type="entry name" value="Bifunctional glutamine synthetase adenylyltransferase/adenylyl-removing enzyme"/>
    <property type="match status" value="1"/>
</dbReference>
<dbReference type="FunFam" id="1.20.120.330:FF:000005">
    <property type="entry name" value="Bifunctional glutamine synthetase adenylyltransferase/adenylyl-removing enzyme"/>
    <property type="match status" value="1"/>
</dbReference>
<dbReference type="FunFam" id="1.20.120.330:FF:000008">
    <property type="entry name" value="Bifunctional glutamine synthetase adenylyltransferase/adenylyl-removing enzyme"/>
    <property type="match status" value="1"/>
</dbReference>
<dbReference type="FunFam" id="3.30.460.10:FF:000009">
    <property type="entry name" value="Bifunctional glutamine synthetase adenylyltransferase/adenylyl-removing enzyme"/>
    <property type="match status" value="1"/>
</dbReference>
<dbReference type="FunFam" id="3.30.460.10:FF:000014">
    <property type="entry name" value="Bifunctional glutamine synthetase adenylyltransferase/adenylyl-removing enzyme"/>
    <property type="match status" value="1"/>
</dbReference>
<dbReference type="Gene3D" id="1.20.120.1510">
    <property type="match status" value="1"/>
</dbReference>
<dbReference type="Gene3D" id="3.30.460.10">
    <property type="entry name" value="Beta Polymerase, domain 2"/>
    <property type="match status" value="2"/>
</dbReference>
<dbReference type="Gene3D" id="1.10.4050.10">
    <property type="entry name" value="Glutamine synthase adenylyltransferase GlnE"/>
    <property type="match status" value="1"/>
</dbReference>
<dbReference type="Gene3D" id="1.20.120.330">
    <property type="entry name" value="Nucleotidyltransferases domain 2"/>
    <property type="match status" value="2"/>
</dbReference>
<dbReference type="HAMAP" id="MF_00802">
    <property type="entry name" value="GlnE"/>
    <property type="match status" value="1"/>
</dbReference>
<dbReference type="InterPro" id="IPR023057">
    <property type="entry name" value="GlnE"/>
</dbReference>
<dbReference type="InterPro" id="IPR005190">
    <property type="entry name" value="GlnE_rpt_dom"/>
</dbReference>
<dbReference type="InterPro" id="IPR043519">
    <property type="entry name" value="NT_sf"/>
</dbReference>
<dbReference type="InterPro" id="IPR013546">
    <property type="entry name" value="PII_UdlTrfase/GS_AdlTrfase"/>
</dbReference>
<dbReference type="NCBIfam" id="NF008292">
    <property type="entry name" value="PRK11072.1"/>
    <property type="match status" value="1"/>
</dbReference>
<dbReference type="PANTHER" id="PTHR30621:SF0">
    <property type="entry name" value="BIFUNCTIONAL GLUTAMINE SYNTHETASE ADENYLYLTRANSFERASE_ADENYLYL-REMOVING ENZYME"/>
    <property type="match status" value="1"/>
</dbReference>
<dbReference type="PANTHER" id="PTHR30621">
    <property type="entry name" value="GLUTAMINE SYNTHETASE ADENYLYLTRANSFERASE"/>
    <property type="match status" value="1"/>
</dbReference>
<dbReference type="Pfam" id="PF08335">
    <property type="entry name" value="GlnD_UR_UTase"/>
    <property type="match status" value="2"/>
</dbReference>
<dbReference type="Pfam" id="PF03710">
    <property type="entry name" value="GlnE"/>
    <property type="match status" value="2"/>
</dbReference>
<dbReference type="SUPFAM" id="SSF81301">
    <property type="entry name" value="Nucleotidyltransferase"/>
    <property type="match status" value="2"/>
</dbReference>
<dbReference type="SUPFAM" id="SSF81593">
    <property type="entry name" value="Nucleotidyltransferase substrate binding subunit/domain"/>
    <property type="match status" value="2"/>
</dbReference>
<keyword id="KW-0067">ATP-binding</keyword>
<keyword id="KW-0460">Magnesium</keyword>
<keyword id="KW-0511">Multifunctional enzyme</keyword>
<keyword id="KW-0547">Nucleotide-binding</keyword>
<keyword id="KW-0548">Nucleotidyltransferase</keyword>
<keyword id="KW-1185">Reference proteome</keyword>
<keyword id="KW-0808">Transferase</keyword>
<gene>
    <name evidence="1" type="primary">glnE</name>
    <name type="ordered locus">SSON_3190</name>
</gene>
<reference key="1">
    <citation type="journal article" date="2005" name="Nucleic Acids Res.">
        <title>Genome dynamics and diversity of Shigella species, the etiologic agents of bacillary dysentery.</title>
        <authorList>
            <person name="Yang F."/>
            <person name="Yang J."/>
            <person name="Zhang X."/>
            <person name="Chen L."/>
            <person name="Jiang Y."/>
            <person name="Yan Y."/>
            <person name="Tang X."/>
            <person name="Wang J."/>
            <person name="Xiong Z."/>
            <person name="Dong J."/>
            <person name="Xue Y."/>
            <person name="Zhu Y."/>
            <person name="Xu X."/>
            <person name="Sun L."/>
            <person name="Chen S."/>
            <person name="Nie H."/>
            <person name="Peng J."/>
            <person name="Xu J."/>
            <person name="Wang Y."/>
            <person name="Yuan Z."/>
            <person name="Wen Y."/>
            <person name="Yao Z."/>
            <person name="Shen Y."/>
            <person name="Qiang B."/>
            <person name="Hou Y."/>
            <person name="Yu J."/>
            <person name="Jin Q."/>
        </authorList>
    </citation>
    <scope>NUCLEOTIDE SEQUENCE [LARGE SCALE GENOMIC DNA]</scope>
    <source>
        <strain>Ss046</strain>
    </source>
</reference>
<comment type="function">
    <text evidence="1">Involved in the regulation of glutamine synthetase GlnA, a key enzyme in the process to assimilate ammonia. When cellular nitrogen levels are high, the C-terminal adenylyl transferase (AT) inactivates GlnA by covalent transfer of an adenylyl group from ATP to specific tyrosine residue of GlnA, thus reducing its activity. Conversely, when nitrogen levels are low, the N-terminal adenylyl removase (AR) activates GlnA by removing the adenylyl group by phosphorolysis, increasing its activity. The regulatory region of GlnE binds the signal transduction protein PII (GlnB) which indicates the nitrogen status of the cell.</text>
</comment>
<comment type="catalytic activity">
    <reaction evidence="1">
        <text>[glutamine synthetase]-O(4)-(5'-adenylyl)-L-tyrosine + phosphate = [glutamine synthetase]-L-tyrosine + ADP</text>
        <dbReference type="Rhea" id="RHEA:43716"/>
        <dbReference type="Rhea" id="RHEA-COMP:10660"/>
        <dbReference type="Rhea" id="RHEA-COMP:10661"/>
        <dbReference type="ChEBI" id="CHEBI:43474"/>
        <dbReference type="ChEBI" id="CHEBI:46858"/>
        <dbReference type="ChEBI" id="CHEBI:83624"/>
        <dbReference type="ChEBI" id="CHEBI:456216"/>
        <dbReference type="EC" id="2.7.7.89"/>
    </reaction>
</comment>
<comment type="catalytic activity">
    <reaction evidence="1">
        <text>[glutamine synthetase]-L-tyrosine + ATP = [glutamine synthetase]-O(4)-(5'-adenylyl)-L-tyrosine + diphosphate</text>
        <dbReference type="Rhea" id="RHEA:18589"/>
        <dbReference type="Rhea" id="RHEA-COMP:10660"/>
        <dbReference type="Rhea" id="RHEA-COMP:10661"/>
        <dbReference type="ChEBI" id="CHEBI:30616"/>
        <dbReference type="ChEBI" id="CHEBI:33019"/>
        <dbReference type="ChEBI" id="CHEBI:46858"/>
        <dbReference type="ChEBI" id="CHEBI:83624"/>
        <dbReference type="EC" id="2.7.7.42"/>
    </reaction>
</comment>
<comment type="cofactor">
    <cofactor evidence="1">
        <name>Mg(2+)</name>
        <dbReference type="ChEBI" id="CHEBI:18420"/>
    </cofactor>
</comment>
<comment type="similarity">
    <text evidence="1">Belongs to the GlnE family.</text>
</comment>
<accession>Q3YXI9</accession>
<name>GLNE_SHISS</name>
<evidence type="ECO:0000255" key="1">
    <source>
        <dbReference type="HAMAP-Rule" id="MF_00802"/>
    </source>
</evidence>
<proteinExistence type="inferred from homology"/>